<feature type="chain" id="PRO_1000140497" description="Small ribosomal subunit protein uS8">
    <location>
        <begin position="1"/>
        <end position="131"/>
    </location>
</feature>
<comment type="function">
    <text evidence="1">One of the primary rRNA binding proteins, it binds directly to 16S rRNA central domain where it helps coordinate assembly of the platform of the 30S subunit.</text>
</comment>
<comment type="subunit">
    <text evidence="1">Part of the 30S ribosomal subunit. Contacts proteins S5 and S12.</text>
</comment>
<comment type="similarity">
    <text evidence="1">Belongs to the universal ribosomal protein uS8 family.</text>
</comment>
<name>RS8_ACIBS</name>
<sequence>MSMQDTVADMLTRVRNAQMAKKQTVSMPSSKLKVAIANVLQQEGYISNVEVAQEETKSTLTITLKYFEGKPVIEMVKRVSRPGLRQYRGKDKLPSVKQGLGIAIVSTSKGIMTDRAARAAGIGGEVIAFVS</sequence>
<evidence type="ECO:0000255" key="1">
    <source>
        <dbReference type="HAMAP-Rule" id="MF_01302"/>
    </source>
</evidence>
<evidence type="ECO:0000305" key="2"/>
<organism>
    <name type="scientific">Acinetobacter baumannii (strain SDF)</name>
    <dbReference type="NCBI Taxonomy" id="509170"/>
    <lineage>
        <taxon>Bacteria</taxon>
        <taxon>Pseudomonadati</taxon>
        <taxon>Pseudomonadota</taxon>
        <taxon>Gammaproteobacteria</taxon>
        <taxon>Moraxellales</taxon>
        <taxon>Moraxellaceae</taxon>
        <taxon>Acinetobacter</taxon>
        <taxon>Acinetobacter calcoaceticus/baumannii complex</taxon>
    </lineage>
</organism>
<reference key="1">
    <citation type="journal article" date="2008" name="PLoS ONE">
        <title>Comparative analysis of Acinetobacters: three genomes for three lifestyles.</title>
        <authorList>
            <person name="Vallenet D."/>
            <person name="Nordmann P."/>
            <person name="Barbe V."/>
            <person name="Poirel L."/>
            <person name="Mangenot S."/>
            <person name="Bataille E."/>
            <person name="Dossat C."/>
            <person name="Gas S."/>
            <person name="Kreimeyer A."/>
            <person name="Lenoble P."/>
            <person name="Oztas S."/>
            <person name="Poulain J."/>
            <person name="Segurens B."/>
            <person name="Robert C."/>
            <person name="Abergel C."/>
            <person name="Claverie J.-M."/>
            <person name="Raoult D."/>
            <person name="Medigue C."/>
            <person name="Weissenbach J."/>
            <person name="Cruveiller S."/>
        </authorList>
    </citation>
    <scope>NUCLEOTIDE SEQUENCE [LARGE SCALE GENOMIC DNA]</scope>
    <source>
        <strain>SDF</strain>
    </source>
</reference>
<accession>B0VQT2</accession>
<protein>
    <recommendedName>
        <fullName evidence="1">Small ribosomal subunit protein uS8</fullName>
    </recommendedName>
    <alternativeName>
        <fullName evidence="2">30S ribosomal protein S8</fullName>
    </alternativeName>
</protein>
<proteinExistence type="inferred from homology"/>
<keyword id="KW-0687">Ribonucleoprotein</keyword>
<keyword id="KW-0689">Ribosomal protein</keyword>
<keyword id="KW-0694">RNA-binding</keyword>
<keyword id="KW-0699">rRNA-binding</keyword>
<gene>
    <name evidence="1" type="primary">rpsH</name>
    <name type="ordered locus">ABSDF0437</name>
</gene>
<dbReference type="EMBL" id="CU468230">
    <property type="protein sequence ID" value="CAO99828.1"/>
    <property type="molecule type" value="Genomic_DNA"/>
</dbReference>
<dbReference type="SMR" id="B0VQT2"/>
<dbReference type="KEGG" id="abm:ABSDF0437"/>
<dbReference type="HOGENOM" id="CLU_098428_0_0_6"/>
<dbReference type="Proteomes" id="UP000001741">
    <property type="component" value="Chromosome"/>
</dbReference>
<dbReference type="GO" id="GO:1990904">
    <property type="term" value="C:ribonucleoprotein complex"/>
    <property type="evidence" value="ECO:0007669"/>
    <property type="project" value="UniProtKB-KW"/>
</dbReference>
<dbReference type="GO" id="GO:0005840">
    <property type="term" value="C:ribosome"/>
    <property type="evidence" value="ECO:0007669"/>
    <property type="project" value="UniProtKB-KW"/>
</dbReference>
<dbReference type="GO" id="GO:0019843">
    <property type="term" value="F:rRNA binding"/>
    <property type="evidence" value="ECO:0007669"/>
    <property type="project" value="UniProtKB-UniRule"/>
</dbReference>
<dbReference type="GO" id="GO:0003735">
    <property type="term" value="F:structural constituent of ribosome"/>
    <property type="evidence" value="ECO:0007669"/>
    <property type="project" value="InterPro"/>
</dbReference>
<dbReference type="GO" id="GO:0006412">
    <property type="term" value="P:translation"/>
    <property type="evidence" value="ECO:0007669"/>
    <property type="project" value="UniProtKB-UniRule"/>
</dbReference>
<dbReference type="FunFam" id="3.30.1370.30:FF:000002">
    <property type="entry name" value="30S ribosomal protein S8"/>
    <property type="match status" value="1"/>
</dbReference>
<dbReference type="FunFam" id="3.30.1490.10:FF:000001">
    <property type="entry name" value="30S ribosomal protein S8"/>
    <property type="match status" value="1"/>
</dbReference>
<dbReference type="Gene3D" id="3.30.1370.30">
    <property type="match status" value="1"/>
</dbReference>
<dbReference type="Gene3D" id="3.30.1490.10">
    <property type="match status" value="1"/>
</dbReference>
<dbReference type="HAMAP" id="MF_01302_B">
    <property type="entry name" value="Ribosomal_uS8_B"/>
    <property type="match status" value="1"/>
</dbReference>
<dbReference type="InterPro" id="IPR000630">
    <property type="entry name" value="Ribosomal_uS8"/>
</dbReference>
<dbReference type="InterPro" id="IPR047863">
    <property type="entry name" value="Ribosomal_uS8_CS"/>
</dbReference>
<dbReference type="InterPro" id="IPR035987">
    <property type="entry name" value="Ribosomal_uS8_sf"/>
</dbReference>
<dbReference type="NCBIfam" id="NF001109">
    <property type="entry name" value="PRK00136.1"/>
    <property type="match status" value="1"/>
</dbReference>
<dbReference type="PANTHER" id="PTHR11758">
    <property type="entry name" value="40S RIBOSOMAL PROTEIN S15A"/>
    <property type="match status" value="1"/>
</dbReference>
<dbReference type="Pfam" id="PF00410">
    <property type="entry name" value="Ribosomal_S8"/>
    <property type="match status" value="1"/>
</dbReference>
<dbReference type="SUPFAM" id="SSF56047">
    <property type="entry name" value="Ribosomal protein S8"/>
    <property type="match status" value="1"/>
</dbReference>
<dbReference type="PROSITE" id="PS00053">
    <property type="entry name" value="RIBOSOMAL_S8"/>
    <property type="match status" value="1"/>
</dbReference>